<accession>Q5F380</accession>
<sequence length="418" mass="46577">MAGGRPGLRAALGAGLLARLSLVLYGLYQDAVMRVRYTDVDYRVFTDAARLVTQGRSPYRRATFRYTPLLAWLLTPNVHLGELFGKLLFVAGDLAAAGVAYRALRRRGASPGRACGCCAAAWLLNPLPMAVSSRGNAEALVAVLVLAALHLVEAGSVGRAALCYGLAVHLKIYPLTYALPIALRLQGSGEGAAGAGRDGTAEFTLVGGIWRRVVRVLNRNVLLFGAVAGSVLAALTVLFYHLYGWEFLEHAYLYHLTRRDIRHNFSPYFYMLYLTAESKWSFALGLAAFLPQLLLLLVVSVAFYKDLFFCCFLHTAIFVSFNKVCTSQYFIWYLCLLPIIIPNIKMSWRRGVLLLFLWFAGQGLWLAPAYLLEFKGYNTFVFIWSAGLLFLFINSFILVQIISHYQQETQVARKVKEQ</sequence>
<proteinExistence type="evidence at transcript level"/>
<feature type="chain" id="PRO_0000246218" description="GPI alpha-1,4-mannosyltransferase I, catalytic subunit">
    <location>
        <begin position="1"/>
        <end position="418"/>
    </location>
</feature>
<feature type="topological domain" description="Cytoplasmic" evidence="3">
    <location>
        <begin position="1"/>
        <end position="6"/>
    </location>
</feature>
<feature type="transmembrane region" description="Helical" evidence="3">
    <location>
        <begin position="7"/>
        <end position="27"/>
    </location>
</feature>
<feature type="topological domain" description="Lumenal" evidence="3">
    <location>
        <begin position="28"/>
        <end position="79"/>
    </location>
</feature>
<feature type="transmembrane region" description="Helical" evidence="3">
    <location>
        <begin position="80"/>
        <end position="100"/>
    </location>
</feature>
<feature type="topological domain" description="Cytoplasmic" evidence="3">
    <location>
        <begin position="101"/>
        <end position="136"/>
    </location>
</feature>
<feature type="transmembrane region" description="Helical" evidence="3">
    <location>
        <begin position="137"/>
        <end position="157"/>
    </location>
</feature>
<feature type="topological domain" description="Lumenal" evidence="3">
    <location>
        <begin position="158"/>
        <end position="220"/>
    </location>
</feature>
<feature type="transmembrane region" description="Helical" evidence="3">
    <location>
        <begin position="221"/>
        <end position="241"/>
    </location>
</feature>
<feature type="topological domain" description="Cytoplasmic" evidence="3">
    <location>
        <begin position="242"/>
        <end position="281"/>
    </location>
</feature>
<feature type="transmembrane region" description="Helical" evidence="3">
    <location>
        <begin position="282"/>
        <end position="302"/>
    </location>
</feature>
<feature type="topological domain" description="Lumenal" evidence="3">
    <location>
        <begin position="303"/>
        <end position="323"/>
    </location>
</feature>
<feature type="transmembrane region" description="Helical" evidence="3">
    <location>
        <begin position="324"/>
        <end position="344"/>
    </location>
</feature>
<feature type="topological domain" description="Cytoplasmic" evidence="3">
    <location>
        <begin position="345"/>
        <end position="351"/>
    </location>
</feature>
<feature type="transmembrane region" description="Helical" evidence="3">
    <location>
        <begin position="352"/>
        <end position="372"/>
    </location>
</feature>
<feature type="topological domain" description="Lumenal" evidence="3">
    <location>
        <begin position="373"/>
        <end position="378"/>
    </location>
</feature>
<feature type="transmembrane region" description="Helical" evidence="3">
    <location>
        <begin position="379"/>
        <end position="399"/>
    </location>
</feature>
<feature type="topological domain" description="Cytoplasmic" evidence="3">
    <location>
        <begin position="400"/>
        <end position="418"/>
    </location>
</feature>
<name>PIGM_CHICK</name>
<reference key="1">
    <citation type="journal article" date="2005" name="Genome Biol.">
        <title>Full-length cDNAs from chicken bursal lymphocytes to facilitate gene function analysis.</title>
        <authorList>
            <person name="Caldwell R.B."/>
            <person name="Kierzek A.M."/>
            <person name="Arakawa H."/>
            <person name="Bezzubov Y."/>
            <person name="Zaim J."/>
            <person name="Fiedler P."/>
            <person name="Kutter S."/>
            <person name="Blagodatski A."/>
            <person name="Kostovska D."/>
            <person name="Koter M."/>
            <person name="Plachy J."/>
            <person name="Carninci P."/>
            <person name="Hayashizaki Y."/>
            <person name="Buerstedde J.-M."/>
        </authorList>
    </citation>
    <scope>NUCLEOTIDE SEQUENCE [LARGE SCALE MRNA]</scope>
    <source>
        <strain>CB</strain>
        <tissue>Bursa of Fabricius</tissue>
    </source>
</reference>
<evidence type="ECO:0000250" key="1">
    <source>
        <dbReference type="UniProtKB" id="Q9EQY6"/>
    </source>
</evidence>
<evidence type="ECO:0000250" key="2">
    <source>
        <dbReference type="UniProtKB" id="Q9H3S5"/>
    </source>
</evidence>
<evidence type="ECO:0000255" key="3"/>
<evidence type="ECO:0000305" key="4"/>
<comment type="function">
    <text evidence="2">Catalytic subunit of the glycosylphosphatidylinositol-mannosyltransferase I complex which catalyzes the transfer of the first mannose, via an alpha-1,4 bond from a dolichol-phosphate-mannose (Dol-P-Man) to the glucosaminyl acyl phosphatidylinositol (GlcN-(acyl)PI) intermediate to generate alpha-D-Man-(1-&gt;4)-alpha-D-GlcN-(1-&gt;6)-(1-radyl,2-acyl-sn-glycero-3-phospho)-2-acyl-inositol and participates in the sixth step of the glycosylphosphatidylinositol-anchor biosynthesis.</text>
</comment>
<comment type="pathway">
    <text evidence="2">Glycolipid biosynthesis; glycosylphosphatidylinositol-anchor biosynthesis.</text>
</comment>
<comment type="subunit">
    <text evidence="1">Part of the glycosylphosphatidylinositol-mannosyltransferase I complex that is composed of PIGM and PIGX.</text>
</comment>
<comment type="subcellular location">
    <subcellularLocation>
        <location evidence="2">Endoplasmic reticulum membrane</location>
        <topology evidence="2">Multi-pass membrane protein</topology>
    </subcellularLocation>
</comment>
<comment type="similarity">
    <text evidence="4">Belongs to the PIGM family.</text>
</comment>
<comment type="sequence caution" evidence="4">
    <conflict type="erroneous initiation">
        <sequence resource="EMBL-CDS" id="CAH65404"/>
    </conflict>
    <text>Truncated N-terminus.</text>
</comment>
<dbReference type="EC" id="2.4.1.-" evidence="2"/>
<dbReference type="EMBL" id="AJ851770">
    <property type="protein sequence ID" value="CAH65404.1"/>
    <property type="status" value="ALT_INIT"/>
    <property type="molecule type" value="mRNA"/>
</dbReference>
<dbReference type="RefSeq" id="NP_001026693.3">
    <property type="nucleotide sequence ID" value="NM_001031522.3"/>
</dbReference>
<dbReference type="SMR" id="Q5F380"/>
<dbReference type="FunCoup" id="Q5F380">
    <property type="interactions" value="1721"/>
</dbReference>
<dbReference type="STRING" id="9031.ENSGALP00000037081"/>
<dbReference type="CAZy" id="GT50">
    <property type="family name" value="Glycosyltransferase Family 50"/>
</dbReference>
<dbReference type="PaxDb" id="9031-ENSGALP00000037081"/>
<dbReference type="GeneID" id="428583"/>
<dbReference type="KEGG" id="gga:428583"/>
<dbReference type="CTD" id="93183"/>
<dbReference type="VEuPathDB" id="HostDB:geneid_428583"/>
<dbReference type="eggNOG" id="KOG3893">
    <property type="taxonomic scope" value="Eukaryota"/>
</dbReference>
<dbReference type="InParanoid" id="Q5F380"/>
<dbReference type="OMA" id="MLWFIGQ"/>
<dbReference type="OrthoDB" id="1741594at2759"/>
<dbReference type="PhylomeDB" id="Q5F380"/>
<dbReference type="UniPathway" id="UPA00196"/>
<dbReference type="PRO" id="PR:Q5F380"/>
<dbReference type="Proteomes" id="UP000000539">
    <property type="component" value="Unassembled WGS sequence"/>
</dbReference>
<dbReference type="GO" id="GO:0005789">
    <property type="term" value="C:endoplasmic reticulum membrane"/>
    <property type="evidence" value="ECO:0000250"/>
    <property type="project" value="UniProtKB"/>
</dbReference>
<dbReference type="GO" id="GO:1990529">
    <property type="term" value="C:glycosylphosphatidylinositol-mannosyltransferase I complex"/>
    <property type="evidence" value="ECO:0000250"/>
    <property type="project" value="UniProtKB"/>
</dbReference>
<dbReference type="GO" id="GO:0180041">
    <property type="term" value="F:glycolipid 1,4-alpha-mannosyltransferase activity"/>
    <property type="evidence" value="ECO:0000250"/>
    <property type="project" value="UniProtKB"/>
</dbReference>
<dbReference type="GO" id="GO:0000030">
    <property type="term" value="F:mannosyltransferase activity"/>
    <property type="evidence" value="ECO:0000318"/>
    <property type="project" value="GO_Central"/>
</dbReference>
<dbReference type="GO" id="GO:0006506">
    <property type="term" value="P:GPI anchor biosynthetic process"/>
    <property type="evidence" value="ECO:0000250"/>
    <property type="project" value="UniProtKB"/>
</dbReference>
<dbReference type="InterPro" id="IPR007704">
    <property type="entry name" value="PIG-M"/>
</dbReference>
<dbReference type="PANTHER" id="PTHR12886:SF0">
    <property type="entry name" value="GPI MANNOSYLTRANSFERASE 1"/>
    <property type="match status" value="1"/>
</dbReference>
<dbReference type="PANTHER" id="PTHR12886">
    <property type="entry name" value="PIG-M MANNOSYLTRANSFERASE"/>
    <property type="match status" value="1"/>
</dbReference>
<dbReference type="Pfam" id="PF05007">
    <property type="entry name" value="Mannosyl_trans"/>
    <property type="match status" value="1"/>
</dbReference>
<gene>
    <name evidence="2" type="primary">PIGM</name>
    <name type="ORF">RCJMB04_29i7</name>
</gene>
<protein>
    <recommendedName>
        <fullName evidence="2">GPI alpha-1,4-mannosyltransferase I, catalytic subunit</fullName>
        <ecNumber evidence="2">2.4.1.-</ecNumber>
    </recommendedName>
    <alternativeName>
        <fullName>GPI mannosyltransferase I</fullName>
        <shortName>GPI-MT-I</shortName>
    </alternativeName>
    <alternativeName>
        <fullName>Phosphatidylinositol-glycan biosynthesis class M protein</fullName>
        <shortName>PIG-M</shortName>
    </alternativeName>
</protein>
<keyword id="KW-0256">Endoplasmic reticulum</keyword>
<keyword id="KW-0328">Glycosyltransferase</keyword>
<keyword id="KW-0337">GPI-anchor biosynthesis</keyword>
<keyword id="KW-0472">Membrane</keyword>
<keyword id="KW-1185">Reference proteome</keyword>
<keyword id="KW-0808">Transferase</keyword>
<keyword id="KW-0812">Transmembrane</keyword>
<keyword id="KW-1133">Transmembrane helix</keyword>
<organism>
    <name type="scientific">Gallus gallus</name>
    <name type="common">Chicken</name>
    <dbReference type="NCBI Taxonomy" id="9031"/>
    <lineage>
        <taxon>Eukaryota</taxon>
        <taxon>Metazoa</taxon>
        <taxon>Chordata</taxon>
        <taxon>Craniata</taxon>
        <taxon>Vertebrata</taxon>
        <taxon>Euteleostomi</taxon>
        <taxon>Archelosauria</taxon>
        <taxon>Archosauria</taxon>
        <taxon>Dinosauria</taxon>
        <taxon>Saurischia</taxon>
        <taxon>Theropoda</taxon>
        <taxon>Coelurosauria</taxon>
        <taxon>Aves</taxon>
        <taxon>Neognathae</taxon>
        <taxon>Galloanserae</taxon>
        <taxon>Galliformes</taxon>
        <taxon>Phasianidae</taxon>
        <taxon>Phasianinae</taxon>
        <taxon>Gallus</taxon>
    </lineage>
</organism>